<keyword id="KW-0067">ATP-binding</keyword>
<keyword id="KW-0547">Nucleotide-binding</keyword>
<keyword id="KW-1185">Reference proteome</keyword>
<keyword id="KW-0808">Transferase</keyword>
<proteinExistence type="inferred from homology"/>
<accession>P58161</accession>
<protein>
    <recommendedName>
        <fullName>2-(5''-triphosphoribosyl)-3'-dephosphocoenzyme-A synthase</fullName>
        <shortName>2-(5''-triphosphoribosyl)-3'-dephospho-CoA synthase</shortName>
        <ecNumber>2.4.2.52</ecNumber>
    </recommendedName>
</protein>
<organism>
    <name type="scientific">Escherichia coli O157:H7</name>
    <dbReference type="NCBI Taxonomy" id="83334"/>
    <lineage>
        <taxon>Bacteria</taxon>
        <taxon>Pseudomonadati</taxon>
        <taxon>Pseudomonadota</taxon>
        <taxon>Gammaproteobacteria</taxon>
        <taxon>Enterobacterales</taxon>
        <taxon>Enterobacteriaceae</taxon>
        <taxon>Escherichia</taxon>
    </lineage>
</organism>
<feature type="chain" id="PRO_0000214666" description="2-(5''-triphosphoribosyl)-3'-dephosphocoenzyme-A synthase">
    <location>
        <begin position="1"/>
        <end position="292"/>
    </location>
</feature>
<reference key="1">
    <citation type="journal article" date="2001" name="Nature">
        <title>Genome sequence of enterohaemorrhagic Escherichia coli O157:H7.</title>
        <authorList>
            <person name="Perna N.T."/>
            <person name="Plunkett G. III"/>
            <person name="Burland V."/>
            <person name="Mau B."/>
            <person name="Glasner J.D."/>
            <person name="Rose D.J."/>
            <person name="Mayhew G.F."/>
            <person name="Evans P.S."/>
            <person name="Gregor J."/>
            <person name="Kirkpatrick H.A."/>
            <person name="Posfai G."/>
            <person name="Hackett J."/>
            <person name="Klink S."/>
            <person name="Boutin A."/>
            <person name="Shao Y."/>
            <person name="Miller L."/>
            <person name="Grotbeck E.J."/>
            <person name="Davis N.W."/>
            <person name="Lim A."/>
            <person name="Dimalanta E.T."/>
            <person name="Potamousis K."/>
            <person name="Apodaca J."/>
            <person name="Anantharaman T.S."/>
            <person name="Lin J."/>
            <person name="Yen G."/>
            <person name="Schwartz D.C."/>
            <person name="Welch R.A."/>
            <person name="Blattner F.R."/>
        </authorList>
    </citation>
    <scope>NUCLEOTIDE SEQUENCE [LARGE SCALE GENOMIC DNA]</scope>
    <source>
        <strain>O157:H7 / EDL933 / ATCC 700927 / EHEC</strain>
    </source>
</reference>
<reference key="2">
    <citation type="journal article" date="2001" name="DNA Res.">
        <title>Complete genome sequence of enterohemorrhagic Escherichia coli O157:H7 and genomic comparison with a laboratory strain K-12.</title>
        <authorList>
            <person name="Hayashi T."/>
            <person name="Makino K."/>
            <person name="Ohnishi M."/>
            <person name="Kurokawa K."/>
            <person name="Ishii K."/>
            <person name="Yokoyama K."/>
            <person name="Han C.-G."/>
            <person name="Ohtsubo E."/>
            <person name="Nakayama K."/>
            <person name="Murata T."/>
            <person name="Tanaka M."/>
            <person name="Tobe T."/>
            <person name="Iida T."/>
            <person name="Takami H."/>
            <person name="Honda T."/>
            <person name="Sasakawa C."/>
            <person name="Ogasawara N."/>
            <person name="Yasunaga T."/>
            <person name="Kuhara S."/>
            <person name="Shiba T."/>
            <person name="Hattori M."/>
            <person name="Shinagawa H."/>
        </authorList>
    </citation>
    <scope>NUCLEOTIDE SEQUENCE [LARGE SCALE GENOMIC DNA]</scope>
    <source>
        <strain>O157:H7 / Sakai / RIMD 0509952 / EHEC</strain>
    </source>
</reference>
<sequence>MSMPATLTKTTKLATSLIDEYALLGWRAMLTEVNLSPKPGLVDRINCGAHKDMALEDFHRSALAIQGWLPRFIEFGACSAEMAPEAVLHGLRPIGMACEGDMFRATAGVNTHKGSIFSLGLLCAAIGRLLQLNQLLTPTTVCSTAASFCRGLTDRELRTNNSQLTAGQRLYQQLGLTGARGEAEAGYPLVINHALPHYLTLLDQGLDPELALLDTLLLLMAINGDTNVASRGGEGGLRWLQREAQTLLQKGGIRTPADLDYLRQFDRECIERNLSPGGSADLLILTWFLAQI</sequence>
<dbReference type="EC" id="2.4.2.52"/>
<dbReference type="EMBL" id="AE005174">
    <property type="protein sequence ID" value="AAG54948.1"/>
    <property type="molecule type" value="Genomic_DNA"/>
</dbReference>
<dbReference type="EMBL" id="BA000007">
    <property type="protein sequence ID" value="BAB34075.1"/>
    <property type="molecule type" value="Genomic_DNA"/>
</dbReference>
<dbReference type="PIR" id="D90710">
    <property type="entry name" value="D90710"/>
</dbReference>
<dbReference type="PIR" id="H85560">
    <property type="entry name" value="H85560"/>
</dbReference>
<dbReference type="RefSeq" id="NP_308679.1">
    <property type="nucleotide sequence ID" value="NC_002695.1"/>
</dbReference>
<dbReference type="RefSeq" id="WP_000062434.1">
    <property type="nucleotide sequence ID" value="NZ_VOAI01000012.1"/>
</dbReference>
<dbReference type="STRING" id="155864.Z0757"/>
<dbReference type="GeneID" id="917011"/>
<dbReference type="KEGG" id="ece:Z0757"/>
<dbReference type="KEGG" id="ecs:ECs_0652"/>
<dbReference type="PATRIC" id="fig|386585.9.peg.763"/>
<dbReference type="eggNOG" id="COG1767">
    <property type="taxonomic scope" value="Bacteria"/>
</dbReference>
<dbReference type="HOGENOM" id="CLU_056179_1_0_6"/>
<dbReference type="OMA" id="ACEQAMY"/>
<dbReference type="Proteomes" id="UP000000558">
    <property type="component" value="Chromosome"/>
</dbReference>
<dbReference type="Proteomes" id="UP000002519">
    <property type="component" value="Chromosome"/>
</dbReference>
<dbReference type="GO" id="GO:0005524">
    <property type="term" value="F:ATP binding"/>
    <property type="evidence" value="ECO:0007669"/>
    <property type="project" value="UniProtKB-KW"/>
</dbReference>
<dbReference type="GO" id="GO:0046917">
    <property type="term" value="F:triphosphoribosyl-dephospho-CoA synthase activity"/>
    <property type="evidence" value="ECO:0007669"/>
    <property type="project" value="UniProtKB-UniRule"/>
</dbReference>
<dbReference type="GO" id="GO:0051191">
    <property type="term" value="P:prosthetic group biosynthetic process"/>
    <property type="evidence" value="ECO:0007669"/>
    <property type="project" value="TreeGrafter"/>
</dbReference>
<dbReference type="FunFam" id="1.10.4200.10:FF:000001">
    <property type="entry name" value="Triphosphoribosyl-dephospho-CoA synthase CitG"/>
    <property type="match status" value="1"/>
</dbReference>
<dbReference type="Gene3D" id="1.10.4200.10">
    <property type="entry name" value="Triphosphoribosyl-dephospho-CoA protein"/>
    <property type="match status" value="1"/>
</dbReference>
<dbReference type="HAMAP" id="MF_00397">
    <property type="entry name" value="CitG"/>
    <property type="match status" value="1"/>
</dbReference>
<dbReference type="InterPro" id="IPR002736">
    <property type="entry name" value="CitG"/>
</dbReference>
<dbReference type="InterPro" id="IPR017551">
    <property type="entry name" value="TriPribosyl-deP-CoA_syn_CitG"/>
</dbReference>
<dbReference type="NCBIfam" id="TIGR03125">
    <property type="entry name" value="citrate_citG"/>
    <property type="match status" value="1"/>
</dbReference>
<dbReference type="NCBIfam" id="NF007503">
    <property type="entry name" value="PRK10096.1"/>
    <property type="match status" value="1"/>
</dbReference>
<dbReference type="PANTHER" id="PTHR30201:SF2">
    <property type="entry name" value="2-(5''-TRIPHOSPHORIBOSYL)-3'-DEPHOSPHOCOENZYME-A SYNTHASE"/>
    <property type="match status" value="1"/>
</dbReference>
<dbReference type="PANTHER" id="PTHR30201">
    <property type="entry name" value="TRIPHOSPHORIBOSYL-DEPHOSPHO-COA SYNTHASE"/>
    <property type="match status" value="1"/>
</dbReference>
<dbReference type="Pfam" id="PF01874">
    <property type="entry name" value="CitG"/>
    <property type="match status" value="1"/>
</dbReference>
<gene>
    <name type="primary">citG</name>
    <name type="ordered locus">Z0757</name>
    <name type="ordered locus">ECs0652</name>
</gene>
<name>CITG_ECO57</name>
<comment type="function">
    <text evidence="1">Catalyzes the formation of 2-(5''-triphosphoribosyl)-3'-dephosphocoenzyme-A, the precursor of the prosthetic group of the holo-acyl carrier protein (gamma chain) of citrate lyase, from ATP and dephospho-CoA.</text>
</comment>
<comment type="catalytic activity">
    <reaction>
        <text>3'-dephospho-CoA + ATP = 2'-(5''-triphospho-alpha-D-ribosyl)-3'-dephospho-CoA + adenine</text>
        <dbReference type="Rhea" id="RHEA:15117"/>
        <dbReference type="ChEBI" id="CHEBI:16708"/>
        <dbReference type="ChEBI" id="CHEBI:30616"/>
        <dbReference type="ChEBI" id="CHEBI:57328"/>
        <dbReference type="ChEBI" id="CHEBI:61378"/>
        <dbReference type="EC" id="2.4.2.52"/>
    </reaction>
</comment>
<comment type="similarity">
    <text evidence="2">Belongs to the CitG/MdcB family.</text>
</comment>
<evidence type="ECO:0000250" key="1"/>
<evidence type="ECO:0000305" key="2"/>